<protein>
    <recommendedName>
        <fullName>Pyruvate kinase 2</fullName>
        <shortName>PK 2</shortName>
        <ecNumber>2.7.1.40</ecNumber>
    </recommendedName>
</protein>
<accession>P30616</accession>
<evidence type="ECO:0000250" key="1"/>
<evidence type="ECO:0000250" key="2">
    <source>
        <dbReference type="UniProtKB" id="P14618"/>
    </source>
</evidence>
<evidence type="ECO:0000255" key="3"/>
<evidence type="ECO:0000305" key="4"/>
<organism>
    <name type="scientific">Trypanosoma brucei brucei</name>
    <dbReference type="NCBI Taxonomy" id="5702"/>
    <lineage>
        <taxon>Eukaryota</taxon>
        <taxon>Discoba</taxon>
        <taxon>Euglenozoa</taxon>
        <taxon>Kinetoplastea</taxon>
        <taxon>Metakinetoplastina</taxon>
        <taxon>Trypanosomatida</taxon>
        <taxon>Trypanosomatidae</taxon>
        <taxon>Trypanosoma</taxon>
    </lineage>
</organism>
<comment type="catalytic activity">
    <reaction>
        <text>pyruvate + ATP = phosphoenolpyruvate + ADP + H(+)</text>
        <dbReference type="Rhea" id="RHEA:18157"/>
        <dbReference type="ChEBI" id="CHEBI:15361"/>
        <dbReference type="ChEBI" id="CHEBI:15378"/>
        <dbReference type="ChEBI" id="CHEBI:30616"/>
        <dbReference type="ChEBI" id="CHEBI:58702"/>
        <dbReference type="ChEBI" id="CHEBI:456216"/>
        <dbReference type="EC" id="2.7.1.40"/>
    </reaction>
</comment>
<comment type="cofactor">
    <cofactor>
        <name>Mg(2+)</name>
        <dbReference type="ChEBI" id="CHEBI:18420"/>
    </cofactor>
</comment>
<comment type="cofactor">
    <cofactor>
        <name>K(+)</name>
        <dbReference type="ChEBI" id="CHEBI:29103"/>
    </cofactor>
</comment>
<comment type="activity regulation">
    <text>Activated by fructose 2,6-bisphosphate, activated by the effector in a cooperative manner.</text>
</comment>
<comment type="pathway">
    <text>Carbohydrate degradation; glycolysis; pyruvate from D-glyceraldehyde 3-phosphate: step 5/5.</text>
</comment>
<comment type="subunit">
    <text evidence="1">Homotetramer.</text>
</comment>
<comment type="similarity">
    <text evidence="4">Belongs to the pyruvate kinase family.</text>
</comment>
<sequence>MSQLEHNIGLSIFEPVAKHRANRIVCTIGPSTQSVEALKNLMKSGMSVARMNFSHGSHEYHQTTINNVRAAAAELGLHIGIALDTKGPEIRTGLFKDGEVTFAPGDIVCVTTDPAYEKVGTKEKFYIDYPQLTKAVPVGGSIYVDDGVMTLRVLSKEDDRTLKCHVNNHHRLTDRRGINLPGCEVDLPAVSEKDRKDLEFGVAQGVDMIFASFIRTAEQVREVRAALGEKGKDILIISKIENHQGVQNIDSIIEASNGIMVARGDLGVEIPAEKVCVAQMCIISKCNVVGKPVICATQMLESMTSNPRPTRAEVSDVANAVLNGADCVMLSGETAKGKYPNEVVQYMARICVEAQSATHDTVMFNSIKNLQKIPMCPEEAVCSSAVASAFEVQAKAMLVLSNTGRSARLISKYRPNCPIICVTTRLQTCRQLNVTRSVVSVFYDAAKSGEDKDKEKRVKLGLDFAKKEKYASTGDVVVVVHADHSVKGYPNQTRLIYLP</sequence>
<feature type="chain" id="PRO_0000112104" description="Pyruvate kinase 2">
    <location>
        <begin position="1"/>
        <end position="499"/>
    </location>
</feature>
<feature type="binding site" evidence="1">
    <location>
        <position position="50"/>
    </location>
    <ligand>
        <name>substrate</name>
    </ligand>
</feature>
<feature type="binding site" evidence="2">
    <location>
        <begin position="52"/>
        <end position="55"/>
    </location>
    <ligand>
        <name>ATP</name>
        <dbReference type="ChEBI" id="CHEBI:30616"/>
    </ligand>
</feature>
<feature type="binding site" evidence="1">
    <location>
        <position position="52"/>
    </location>
    <ligand>
        <name>K(+)</name>
        <dbReference type="ChEBI" id="CHEBI:29103"/>
    </ligand>
</feature>
<feature type="binding site" evidence="1">
    <location>
        <position position="54"/>
    </location>
    <ligand>
        <name>K(+)</name>
        <dbReference type="ChEBI" id="CHEBI:29103"/>
    </ligand>
</feature>
<feature type="binding site" evidence="1">
    <location>
        <position position="84"/>
    </location>
    <ligand>
        <name>K(+)</name>
        <dbReference type="ChEBI" id="CHEBI:29103"/>
    </ligand>
</feature>
<feature type="binding site" evidence="1">
    <location>
        <position position="85"/>
    </location>
    <ligand>
        <name>K(+)</name>
        <dbReference type="ChEBI" id="CHEBI:29103"/>
    </ligand>
</feature>
<feature type="binding site" evidence="2">
    <location>
        <position position="91"/>
    </location>
    <ligand>
        <name>ATP</name>
        <dbReference type="ChEBI" id="CHEBI:30616"/>
    </ligand>
</feature>
<feature type="binding site" evidence="3">
    <location>
        <position position="241"/>
    </location>
    <ligand>
        <name>Mg(2+)</name>
        <dbReference type="ChEBI" id="CHEBI:18420"/>
    </ligand>
</feature>
<feature type="binding site" evidence="1">
    <location>
        <position position="264"/>
    </location>
    <ligand>
        <name>substrate</name>
    </ligand>
</feature>
<feature type="binding site" evidence="1">
    <location>
        <position position="265"/>
    </location>
    <ligand>
        <name>Mg(2+)</name>
        <dbReference type="ChEBI" id="CHEBI:18420"/>
    </ligand>
</feature>
<feature type="binding site" evidence="1">
    <location>
        <position position="265"/>
    </location>
    <ligand>
        <name>substrate</name>
    </ligand>
</feature>
<feature type="binding site" evidence="1">
    <location>
        <position position="297"/>
    </location>
    <ligand>
        <name>substrate</name>
    </ligand>
</feature>
<feature type="site" description="Transition state stabilizer" evidence="1">
    <location>
        <position position="239"/>
    </location>
</feature>
<gene>
    <name type="primary">PYK2</name>
</gene>
<dbReference type="EC" id="2.7.1.40"/>
<dbReference type="EMBL" id="X57951">
    <property type="protein sequence ID" value="CAA41019.1"/>
    <property type="molecule type" value="Genomic_DNA"/>
</dbReference>
<dbReference type="PIR" id="S17649">
    <property type="entry name" value="S17649"/>
</dbReference>
<dbReference type="SMR" id="P30616"/>
<dbReference type="SABIO-RK" id="P30616"/>
<dbReference type="UniPathway" id="UPA00109">
    <property type="reaction ID" value="UER00188"/>
</dbReference>
<dbReference type="GO" id="GO:0005524">
    <property type="term" value="F:ATP binding"/>
    <property type="evidence" value="ECO:0007669"/>
    <property type="project" value="UniProtKB-KW"/>
</dbReference>
<dbReference type="GO" id="GO:0016301">
    <property type="term" value="F:kinase activity"/>
    <property type="evidence" value="ECO:0007669"/>
    <property type="project" value="UniProtKB-KW"/>
</dbReference>
<dbReference type="GO" id="GO:0000287">
    <property type="term" value="F:magnesium ion binding"/>
    <property type="evidence" value="ECO:0007669"/>
    <property type="project" value="InterPro"/>
</dbReference>
<dbReference type="GO" id="GO:0030955">
    <property type="term" value="F:potassium ion binding"/>
    <property type="evidence" value="ECO:0007669"/>
    <property type="project" value="InterPro"/>
</dbReference>
<dbReference type="GO" id="GO:0004743">
    <property type="term" value="F:pyruvate kinase activity"/>
    <property type="evidence" value="ECO:0007669"/>
    <property type="project" value="UniProtKB-EC"/>
</dbReference>
<dbReference type="CDD" id="cd00288">
    <property type="entry name" value="Pyruvate_Kinase"/>
    <property type="match status" value="1"/>
</dbReference>
<dbReference type="FunFam" id="2.40.33.10:FF:000001">
    <property type="entry name" value="Pyruvate kinase"/>
    <property type="match status" value="1"/>
</dbReference>
<dbReference type="FunFam" id="3.20.20.60:FF:000025">
    <property type="entry name" value="Pyruvate kinase"/>
    <property type="match status" value="1"/>
</dbReference>
<dbReference type="FunFam" id="3.40.1380.20:FF:000024">
    <property type="entry name" value="Pyruvate kinase"/>
    <property type="match status" value="1"/>
</dbReference>
<dbReference type="Gene3D" id="3.20.20.60">
    <property type="entry name" value="Phosphoenolpyruvate-binding domains"/>
    <property type="match status" value="1"/>
</dbReference>
<dbReference type="Gene3D" id="2.40.33.10">
    <property type="entry name" value="PK beta-barrel domain-like"/>
    <property type="match status" value="1"/>
</dbReference>
<dbReference type="Gene3D" id="3.40.1380.20">
    <property type="entry name" value="Pyruvate kinase, C-terminal domain"/>
    <property type="match status" value="1"/>
</dbReference>
<dbReference type="InterPro" id="IPR001697">
    <property type="entry name" value="Pyr_Knase"/>
</dbReference>
<dbReference type="InterPro" id="IPR015813">
    <property type="entry name" value="Pyrv/PenolPyrv_kinase-like_dom"/>
</dbReference>
<dbReference type="InterPro" id="IPR040442">
    <property type="entry name" value="Pyrv_kinase-like_dom_sf"/>
</dbReference>
<dbReference type="InterPro" id="IPR011037">
    <property type="entry name" value="Pyrv_Knase-like_insert_dom_sf"/>
</dbReference>
<dbReference type="InterPro" id="IPR018209">
    <property type="entry name" value="Pyrv_Knase_AS"/>
</dbReference>
<dbReference type="InterPro" id="IPR015793">
    <property type="entry name" value="Pyrv_Knase_brl"/>
</dbReference>
<dbReference type="InterPro" id="IPR015795">
    <property type="entry name" value="Pyrv_Knase_C"/>
</dbReference>
<dbReference type="InterPro" id="IPR036918">
    <property type="entry name" value="Pyrv_Knase_C_sf"/>
</dbReference>
<dbReference type="InterPro" id="IPR015806">
    <property type="entry name" value="Pyrv_Knase_insert_dom_sf"/>
</dbReference>
<dbReference type="NCBIfam" id="NF004491">
    <property type="entry name" value="PRK05826.1"/>
    <property type="match status" value="1"/>
</dbReference>
<dbReference type="NCBIfam" id="NF004978">
    <property type="entry name" value="PRK06354.1"/>
    <property type="match status" value="1"/>
</dbReference>
<dbReference type="NCBIfam" id="TIGR01064">
    <property type="entry name" value="pyruv_kin"/>
    <property type="match status" value="1"/>
</dbReference>
<dbReference type="PANTHER" id="PTHR11817">
    <property type="entry name" value="PYRUVATE KINASE"/>
    <property type="match status" value="1"/>
</dbReference>
<dbReference type="Pfam" id="PF00224">
    <property type="entry name" value="PK"/>
    <property type="match status" value="1"/>
</dbReference>
<dbReference type="Pfam" id="PF02887">
    <property type="entry name" value="PK_C"/>
    <property type="match status" value="1"/>
</dbReference>
<dbReference type="PRINTS" id="PR01050">
    <property type="entry name" value="PYRUVTKNASE"/>
</dbReference>
<dbReference type="SUPFAM" id="SSF51621">
    <property type="entry name" value="Phosphoenolpyruvate/pyruvate domain"/>
    <property type="match status" value="1"/>
</dbReference>
<dbReference type="SUPFAM" id="SSF50800">
    <property type="entry name" value="PK beta-barrel domain-like"/>
    <property type="match status" value="1"/>
</dbReference>
<dbReference type="SUPFAM" id="SSF52935">
    <property type="entry name" value="PK C-terminal domain-like"/>
    <property type="match status" value="1"/>
</dbReference>
<dbReference type="PROSITE" id="PS00110">
    <property type="entry name" value="PYRUVATE_KINASE"/>
    <property type="match status" value="1"/>
</dbReference>
<keyword id="KW-0021">Allosteric enzyme</keyword>
<keyword id="KW-0067">ATP-binding</keyword>
<keyword id="KW-0324">Glycolysis</keyword>
<keyword id="KW-0418">Kinase</keyword>
<keyword id="KW-0460">Magnesium</keyword>
<keyword id="KW-0479">Metal-binding</keyword>
<keyword id="KW-0547">Nucleotide-binding</keyword>
<keyword id="KW-0630">Potassium</keyword>
<keyword id="KW-0670">Pyruvate</keyword>
<keyword id="KW-0808">Transferase</keyword>
<proteinExistence type="inferred from homology"/>
<name>KPYK2_TRYBB</name>
<reference key="1">
    <citation type="journal article" date="1991" name="Eur. J. Biochem.">
        <title>Molecular cloning and analysis of two tandemly linked genes for pyruvate kinase of Trypanosoma brucei.</title>
        <authorList>
            <person name="Allert S."/>
            <person name="Ernest I."/>
            <person name="Poliszczak A."/>
            <person name="Opperdoes F.R."/>
            <person name="Michels P.A.M."/>
        </authorList>
    </citation>
    <scope>NUCLEOTIDE SEQUENCE [GENOMIC DNA]</scope>
    <source>
        <strain>427</strain>
    </source>
</reference>